<keyword id="KW-0238">DNA-binding</keyword>
<keyword id="KW-0804">Transcription</keyword>
<keyword id="KW-0805">Transcription regulation</keyword>
<sequence>MKTPLITREGYETLKQELNYLWREERPEVTKKVTWAASLGDRSENADYQYNKKRLREIDRRVRYLTKCMENLKIVDYSPQQEGKVFFGAWVEIENDDGDTLKFRIVGYDEIFGRKDYISIDSPMARALLKKEVGDLAVVNTPVGEANWYVNAIEYVK</sequence>
<organism>
    <name type="scientific">Salmonella typhi</name>
    <dbReference type="NCBI Taxonomy" id="90370"/>
    <lineage>
        <taxon>Bacteria</taxon>
        <taxon>Pseudomonadati</taxon>
        <taxon>Pseudomonadota</taxon>
        <taxon>Gammaproteobacteria</taxon>
        <taxon>Enterobacterales</taxon>
        <taxon>Enterobacteriaceae</taxon>
        <taxon>Salmonella</taxon>
    </lineage>
</organism>
<reference key="1">
    <citation type="journal article" date="2001" name="Nature">
        <title>Complete genome sequence of a multiple drug resistant Salmonella enterica serovar Typhi CT18.</title>
        <authorList>
            <person name="Parkhill J."/>
            <person name="Dougan G."/>
            <person name="James K.D."/>
            <person name="Thomson N.R."/>
            <person name="Pickard D."/>
            <person name="Wain J."/>
            <person name="Churcher C.M."/>
            <person name="Mungall K.L."/>
            <person name="Bentley S.D."/>
            <person name="Holden M.T.G."/>
            <person name="Sebaihia M."/>
            <person name="Baker S."/>
            <person name="Basham D."/>
            <person name="Brooks K."/>
            <person name="Chillingworth T."/>
            <person name="Connerton P."/>
            <person name="Cronin A."/>
            <person name="Davis P."/>
            <person name="Davies R.M."/>
            <person name="Dowd L."/>
            <person name="White N."/>
            <person name="Farrar J."/>
            <person name="Feltwell T."/>
            <person name="Hamlin N."/>
            <person name="Haque A."/>
            <person name="Hien T.T."/>
            <person name="Holroyd S."/>
            <person name="Jagels K."/>
            <person name="Krogh A."/>
            <person name="Larsen T.S."/>
            <person name="Leather S."/>
            <person name="Moule S."/>
            <person name="O'Gaora P."/>
            <person name="Parry C."/>
            <person name="Quail M.A."/>
            <person name="Rutherford K.M."/>
            <person name="Simmonds M."/>
            <person name="Skelton J."/>
            <person name="Stevens K."/>
            <person name="Whitehead S."/>
            <person name="Barrell B.G."/>
        </authorList>
    </citation>
    <scope>NUCLEOTIDE SEQUENCE [LARGE SCALE GENOMIC DNA]</scope>
    <source>
        <strain>CT18</strain>
    </source>
</reference>
<reference key="2">
    <citation type="journal article" date="2003" name="J. Bacteriol.">
        <title>Comparative genomics of Salmonella enterica serovar Typhi strains Ty2 and CT18.</title>
        <authorList>
            <person name="Deng W."/>
            <person name="Liou S.-R."/>
            <person name="Plunkett G. III"/>
            <person name="Mayhew G.F."/>
            <person name="Rose D.J."/>
            <person name="Burland V."/>
            <person name="Kodoyianni V."/>
            <person name="Schwartz D.C."/>
            <person name="Blattner F.R."/>
        </authorList>
    </citation>
    <scope>NUCLEOTIDE SEQUENCE [LARGE SCALE GENOMIC DNA]</scope>
    <source>
        <strain>ATCC 700931 / Ty2</strain>
    </source>
</reference>
<feature type="chain" id="PRO_0000176967" description="Transcription elongation factor GreB">
    <location>
        <begin position="1"/>
        <end position="157"/>
    </location>
</feature>
<name>GREB_SALTI</name>
<dbReference type="EMBL" id="AL513382">
    <property type="protein sequence ID" value="CAD08111.1"/>
    <property type="molecule type" value="Genomic_DNA"/>
</dbReference>
<dbReference type="EMBL" id="AE014613">
    <property type="protein sequence ID" value="AAO71473.1"/>
    <property type="molecule type" value="Genomic_DNA"/>
</dbReference>
<dbReference type="RefSeq" id="NP_458401.1">
    <property type="nucleotide sequence ID" value="NC_003198.1"/>
</dbReference>
<dbReference type="RefSeq" id="WP_000856695.1">
    <property type="nucleotide sequence ID" value="NZ_WSUR01000001.1"/>
</dbReference>
<dbReference type="SMR" id="Q8Z217"/>
<dbReference type="STRING" id="220341.gene:17588124"/>
<dbReference type="KEGG" id="stt:t4003"/>
<dbReference type="KEGG" id="sty:STY4293"/>
<dbReference type="PATRIC" id="fig|220341.7.peg.4387"/>
<dbReference type="eggNOG" id="COG0782">
    <property type="taxonomic scope" value="Bacteria"/>
</dbReference>
<dbReference type="HOGENOM" id="CLU_101379_3_0_6"/>
<dbReference type="OMA" id="DEIYGRN"/>
<dbReference type="OrthoDB" id="5511940at2"/>
<dbReference type="Proteomes" id="UP000000541">
    <property type="component" value="Chromosome"/>
</dbReference>
<dbReference type="Proteomes" id="UP000002670">
    <property type="component" value="Chromosome"/>
</dbReference>
<dbReference type="GO" id="GO:0003677">
    <property type="term" value="F:DNA binding"/>
    <property type="evidence" value="ECO:0007669"/>
    <property type="project" value="UniProtKB-UniRule"/>
</dbReference>
<dbReference type="GO" id="GO:0070063">
    <property type="term" value="F:RNA polymerase binding"/>
    <property type="evidence" value="ECO:0007669"/>
    <property type="project" value="InterPro"/>
</dbReference>
<dbReference type="GO" id="GO:0006354">
    <property type="term" value="P:DNA-templated transcription elongation"/>
    <property type="evidence" value="ECO:0007669"/>
    <property type="project" value="TreeGrafter"/>
</dbReference>
<dbReference type="GO" id="GO:0032784">
    <property type="term" value="P:regulation of DNA-templated transcription elongation"/>
    <property type="evidence" value="ECO:0007669"/>
    <property type="project" value="UniProtKB-UniRule"/>
</dbReference>
<dbReference type="FunFam" id="1.10.287.180:FF:000001">
    <property type="entry name" value="Transcription elongation factor GreA"/>
    <property type="match status" value="1"/>
</dbReference>
<dbReference type="FunFam" id="3.10.50.30:FF:000001">
    <property type="entry name" value="Transcription elongation factor GreA"/>
    <property type="match status" value="1"/>
</dbReference>
<dbReference type="Gene3D" id="3.10.50.30">
    <property type="entry name" value="Transcription elongation factor, GreA/GreB, C-terminal domain"/>
    <property type="match status" value="1"/>
</dbReference>
<dbReference type="Gene3D" id="1.10.287.180">
    <property type="entry name" value="Transcription elongation factor, GreA/GreB, N-terminal domain"/>
    <property type="match status" value="1"/>
</dbReference>
<dbReference type="HAMAP" id="MF_00105">
    <property type="entry name" value="GreA_GreB"/>
    <property type="match status" value="1"/>
</dbReference>
<dbReference type="HAMAP" id="MF_00930">
    <property type="entry name" value="GreB"/>
    <property type="match status" value="1"/>
</dbReference>
<dbReference type="InterPro" id="IPR036953">
    <property type="entry name" value="GreA/GreB_C_sf"/>
</dbReference>
<dbReference type="InterPro" id="IPR018151">
    <property type="entry name" value="TF_GreA/GreB_CS"/>
</dbReference>
<dbReference type="InterPro" id="IPR028624">
    <property type="entry name" value="Tscrpt_elong_fac_GreA/B"/>
</dbReference>
<dbReference type="InterPro" id="IPR001437">
    <property type="entry name" value="Tscrpt_elong_fac_GreA/B_C"/>
</dbReference>
<dbReference type="InterPro" id="IPR023459">
    <property type="entry name" value="Tscrpt_elong_fac_GreA/B_fam"/>
</dbReference>
<dbReference type="InterPro" id="IPR022691">
    <property type="entry name" value="Tscrpt_elong_fac_GreA/B_N"/>
</dbReference>
<dbReference type="InterPro" id="IPR036805">
    <property type="entry name" value="Tscrpt_elong_fac_GreA/B_N_sf"/>
</dbReference>
<dbReference type="InterPro" id="IPR006358">
    <property type="entry name" value="Tscrpt_elong_fac_GreB"/>
</dbReference>
<dbReference type="NCBIfam" id="TIGR01461">
    <property type="entry name" value="greB"/>
    <property type="match status" value="1"/>
</dbReference>
<dbReference type="NCBIfam" id="NF002506">
    <property type="entry name" value="PRK01885.1"/>
    <property type="match status" value="1"/>
</dbReference>
<dbReference type="PANTHER" id="PTHR30437">
    <property type="entry name" value="TRANSCRIPTION ELONGATION FACTOR GREA"/>
    <property type="match status" value="1"/>
</dbReference>
<dbReference type="PANTHER" id="PTHR30437:SF6">
    <property type="entry name" value="TRANSCRIPTION ELONGATION FACTOR GREB"/>
    <property type="match status" value="1"/>
</dbReference>
<dbReference type="Pfam" id="PF01272">
    <property type="entry name" value="GreA_GreB"/>
    <property type="match status" value="1"/>
</dbReference>
<dbReference type="Pfam" id="PF03449">
    <property type="entry name" value="GreA_GreB_N"/>
    <property type="match status" value="1"/>
</dbReference>
<dbReference type="PIRSF" id="PIRSF006092">
    <property type="entry name" value="GreA_GreB"/>
    <property type="match status" value="1"/>
</dbReference>
<dbReference type="SUPFAM" id="SSF54534">
    <property type="entry name" value="FKBP-like"/>
    <property type="match status" value="1"/>
</dbReference>
<dbReference type="SUPFAM" id="SSF46557">
    <property type="entry name" value="GreA transcript cleavage protein, N-terminal domain"/>
    <property type="match status" value="1"/>
</dbReference>
<dbReference type="PROSITE" id="PS00829">
    <property type="entry name" value="GREAB_1"/>
    <property type="match status" value="1"/>
</dbReference>
<dbReference type="PROSITE" id="PS00830">
    <property type="entry name" value="GREAB_2"/>
    <property type="match status" value="1"/>
</dbReference>
<accession>Q8Z217</accession>
<gene>
    <name evidence="1" type="primary">greB</name>
    <name type="ordered locus">STY4293</name>
    <name type="ordered locus">t4003</name>
</gene>
<comment type="function">
    <text evidence="1">Necessary for efficient RNA polymerase transcription elongation past template-encoded arresting sites. The arresting sites in DNA have the property of trapping a certain fraction of elongating RNA polymerases that pass through, resulting in locked ternary complexes. Cleavage of the nascent transcript by cleavage factors such as GreA or GreB allows the resumption of elongation from the new 3'terminus. GreB releases sequences of up to 9 nucleotides in length.</text>
</comment>
<comment type="similarity">
    <text evidence="1">Belongs to the GreA/GreB family. GreB subfamily.</text>
</comment>
<protein>
    <recommendedName>
        <fullName evidence="1">Transcription elongation factor GreB</fullName>
    </recommendedName>
    <alternativeName>
        <fullName evidence="1">Transcript cleavage factor GreB</fullName>
    </alternativeName>
</protein>
<proteinExistence type="inferred from homology"/>
<evidence type="ECO:0000255" key="1">
    <source>
        <dbReference type="HAMAP-Rule" id="MF_00930"/>
    </source>
</evidence>